<keyword id="KW-0002">3D-structure</keyword>
<keyword id="KW-0225">Disease variant</keyword>
<keyword id="KW-0472">Membrane</keyword>
<keyword id="KW-0576">Peroxisome</keyword>
<keyword id="KW-0958">Peroxisome biogenesis disorder</keyword>
<keyword id="KW-0597">Phosphoprotein</keyword>
<keyword id="KW-0653">Protein transport</keyword>
<keyword id="KW-1267">Proteomics identification</keyword>
<keyword id="KW-1185">Reference proteome</keyword>
<keyword id="KW-0728">SH3 domain</keyword>
<keyword id="KW-0811">Translocation</keyword>
<keyword id="KW-0812">Transmembrane</keyword>
<keyword id="KW-1133">Transmembrane helix</keyword>
<keyword id="KW-0813">Transport</keyword>
<keyword id="KW-0861">Zellweger syndrome</keyword>
<reference key="1">
    <citation type="journal article" date="1998" name="Proc. Natl. Acad. Sci. U.S.A.">
        <title>Identification of a human PTS1 receptor docking protein directly required for peroxisomal protein import.</title>
        <authorList>
            <person name="Fransen M."/>
            <person name="Terlecky S.R."/>
            <person name="Subramani S."/>
        </authorList>
    </citation>
    <scope>NUCLEOTIDE SEQUENCE [MRNA]</scope>
    <scope>FUNCTION</scope>
</reference>
<reference key="2">
    <citation type="journal article" date="1999" name="Hum. Mol. Genet.">
        <title>Isolation, characterization and mutation analysis of PEX13-defective Chinese hamster ovary cell mutants.</title>
        <authorList>
            <person name="Toyama R."/>
            <person name="Mukai S."/>
            <person name="Itagaki A."/>
            <person name="Tamura S."/>
            <person name="Shimozawa N."/>
            <person name="Suzuki Y."/>
            <person name="Kondo N."/>
            <person name="Wanders R.J."/>
            <person name="Fujiki Y."/>
        </authorList>
    </citation>
    <scope>NUCLEOTIDE SEQUENCE [MRNA]</scope>
</reference>
<reference key="3">
    <citation type="journal article" date="2004" name="Nat. Genet.">
        <title>Complete sequencing and characterization of 21,243 full-length human cDNAs.</title>
        <authorList>
            <person name="Ota T."/>
            <person name="Suzuki Y."/>
            <person name="Nishikawa T."/>
            <person name="Otsuki T."/>
            <person name="Sugiyama T."/>
            <person name="Irie R."/>
            <person name="Wakamatsu A."/>
            <person name="Hayashi K."/>
            <person name="Sato H."/>
            <person name="Nagai K."/>
            <person name="Kimura K."/>
            <person name="Makita H."/>
            <person name="Sekine M."/>
            <person name="Obayashi M."/>
            <person name="Nishi T."/>
            <person name="Shibahara T."/>
            <person name="Tanaka T."/>
            <person name="Ishii S."/>
            <person name="Yamamoto J."/>
            <person name="Saito K."/>
            <person name="Kawai Y."/>
            <person name="Isono Y."/>
            <person name="Nakamura Y."/>
            <person name="Nagahari K."/>
            <person name="Murakami K."/>
            <person name="Yasuda T."/>
            <person name="Iwayanagi T."/>
            <person name="Wagatsuma M."/>
            <person name="Shiratori A."/>
            <person name="Sudo H."/>
            <person name="Hosoiri T."/>
            <person name="Kaku Y."/>
            <person name="Kodaira H."/>
            <person name="Kondo H."/>
            <person name="Sugawara M."/>
            <person name="Takahashi M."/>
            <person name="Kanda K."/>
            <person name="Yokoi T."/>
            <person name="Furuya T."/>
            <person name="Kikkawa E."/>
            <person name="Omura Y."/>
            <person name="Abe K."/>
            <person name="Kamihara K."/>
            <person name="Katsuta N."/>
            <person name="Sato K."/>
            <person name="Tanikawa M."/>
            <person name="Yamazaki M."/>
            <person name="Ninomiya K."/>
            <person name="Ishibashi T."/>
            <person name="Yamashita H."/>
            <person name="Murakawa K."/>
            <person name="Fujimori K."/>
            <person name="Tanai H."/>
            <person name="Kimata M."/>
            <person name="Watanabe M."/>
            <person name="Hiraoka S."/>
            <person name="Chiba Y."/>
            <person name="Ishida S."/>
            <person name="Ono Y."/>
            <person name="Takiguchi S."/>
            <person name="Watanabe S."/>
            <person name="Yosida M."/>
            <person name="Hotuta T."/>
            <person name="Kusano J."/>
            <person name="Kanehori K."/>
            <person name="Takahashi-Fujii A."/>
            <person name="Hara H."/>
            <person name="Tanase T.-O."/>
            <person name="Nomura Y."/>
            <person name="Togiya S."/>
            <person name="Komai F."/>
            <person name="Hara R."/>
            <person name="Takeuchi K."/>
            <person name="Arita M."/>
            <person name="Imose N."/>
            <person name="Musashino K."/>
            <person name="Yuuki H."/>
            <person name="Oshima A."/>
            <person name="Sasaki N."/>
            <person name="Aotsuka S."/>
            <person name="Yoshikawa Y."/>
            <person name="Matsunawa H."/>
            <person name="Ichihara T."/>
            <person name="Shiohata N."/>
            <person name="Sano S."/>
            <person name="Moriya S."/>
            <person name="Momiyama H."/>
            <person name="Satoh N."/>
            <person name="Takami S."/>
            <person name="Terashima Y."/>
            <person name="Suzuki O."/>
            <person name="Nakagawa S."/>
            <person name="Senoh A."/>
            <person name="Mizoguchi H."/>
            <person name="Goto Y."/>
            <person name="Shimizu F."/>
            <person name="Wakebe H."/>
            <person name="Hishigaki H."/>
            <person name="Watanabe T."/>
            <person name="Sugiyama A."/>
            <person name="Takemoto M."/>
            <person name="Kawakami B."/>
            <person name="Yamazaki M."/>
            <person name="Watanabe K."/>
            <person name="Kumagai A."/>
            <person name="Itakura S."/>
            <person name="Fukuzumi Y."/>
            <person name="Fujimori Y."/>
            <person name="Komiyama M."/>
            <person name="Tashiro H."/>
            <person name="Tanigami A."/>
            <person name="Fujiwara T."/>
            <person name="Ono T."/>
            <person name="Yamada K."/>
            <person name="Fujii Y."/>
            <person name="Ozaki K."/>
            <person name="Hirao M."/>
            <person name="Ohmori Y."/>
            <person name="Kawabata A."/>
            <person name="Hikiji T."/>
            <person name="Kobatake N."/>
            <person name="Inagaki H."/>
            <person name="Ikema Y."/>
            <person name="Okamoto S."/>
            <person name="Okitani R."/>
            <person name="Kawakami T."/>
            <person name="Noguchi S."/>
            <person name="Itoh T."/>
            <person name="Shigeta K."/>
            <person name="Senba T."/>
            <person name="Matsumura K."/>
            <person name="Nakajima Y."/>
            <person name="Mizuno T."/>
            <person name="Morinaga M."/>
            <person name="Sasaki M."/>
            <person name="Togashi T."/>
            <person name="Oyama M."/>
            <person name="Hata H."/>
            <person name="Watanabe M."/>
            <person name="Komatsu T."/>
            <person name="Mizushima-Sugano J."/>
            <person name="Satoh T."/>
            <person name="Shirai Y."/>
            <person name="Takahashi Y."/>
            <person name="Nakagawa K."/>
            <person name="Okumura K."/>
            <person name="Nagase T."/>
            <person name="Nomura N."/>
            <person name="Kikuchi H."/>
            <person name="Masuho Y."/>
            <person name="Yamashita R."/>
            <person name="Nakai K."/>
            <person name="Yada T."/>
            <person name="Nakamura Y."/>
            <person name="Ohara O."/>
            <person name="Isogai T."/>
            <person name="Sugano S."/>
        </authorList>
    </citation>
    <scope>NUCLEOTIDE SEQUENCE [LARGE SCALE MRNA]</scope>
    <source>
        <tissue>Trachea</tissue>
    </source>
</reference>
<reference key="4">
    <citation type="submission" date="2005-09" db="EMBL/GenBank/DDBJ databases">
        <authorList>
            <person name="Mural R.J."/>
            <person name="Istrail S."/>
            <person name="Sutton G.G."/>
            <person name="Florea L."/>
            <person name="Halpern A.L."/>
            <person name="Mobarry C.M."/>
            <person name="Lippert R."/>
            <person name="Walenz B."/>
            <person name="Shatkay H."/>
            <person name="Dew I."/>
            <person name="Miller J.R."/>
            <person name="Flanigan M.J."/>
            <person name="Edwards N.J."/>
            <person name="Bolanos R."/>
            <person name="Fasulo D."/>
            <person name="Halldorsson B.V."/>
            <person name="Hannenhalli S."/>
            <person name="Turner R."/>
            <person name="Yooseph S."/>
            <person name="Lu F."/>
            <person name="Nusskern D.R."/>
            <person name="Shue B.C."/>
            <person name="Zheng X.H."/>
            <person name="Zhong F."/>
            <person name="Delcher A.L."/>
            <person name="Huson D.H."/>
            <person name="Kravitz S.A."/>
            <person name="Mouchard L."/>
            <person name="Reinert K."/>
            <person name="Remington K.A."/>
            <person name="Clark A.G."/>
            <person name="Waterman M.S."/>
            <person name="Eichler E.E."/>
            <person name="Adams M.D."/>
            <person name="Hunkapiller M.W."/>
            <person name="Myers E.W."/>
            <person name="Venter J.C."/>
        </authorList>
    </citation>
    <scope>NUCLEOTIDE SEQUENCE [LARGE SCALE GENOMIC DNA]</scope>
</reference>
<reference key="5">
    <citation type="journal article" date="2004" name="Genome Res.">
        <title>The status, quality, and expansion of the NIH full-length cDNA project: the Mammalian Gene Collection (MGC).</title>
        <authorList>
            <consortium name="The MGC Project Team"/>
        </authorList>
    </citation>
    <scope>NUCLEOTIDE SEQUENCE [LARGE SCALE MRNA]</scope>
    <source>
        <tissue>Liver</tissue>
    </source>
</reference>
<reference key="6">
    <citation type="journal article" date="1996" name="J. Cell Biol.">
        <title>Pex13p is an SH3 protein of the peroxisome membrane and a docking factor for the predominantly cytoplasmic PTs1 receptor.</title>
        <authorList>
            <person name="Gould S.J."/>
            <person name="Kalish J.E."/>
            <person name="Morrell J.C."/>
            <person name="Bjoerkman J."/>
            <person name="Urquhart A.J."/>
            <person name="Crane D.I."/>
        </authorList>
    </citation>
    <scope>NUCLEOTIDE SEQUENCE [MRNA] OF 40-403</scope>
    <scope>FUNCTION</scope>
    <scope>SUBCELLULAR LOCATION</scope>
</reference>
<reference key="7">
    <citation type="journal article" date="2000" name="J. Cell Biol.">
        <title>PEX19 binds multiple peroxisomal membrane proteins, is predominantly cytoplasmic, and is required for peroxisome membrane synthesis.</title>
        <authorList>
            <person name="Sacksteder K.A."/>
            <person name="Jones J.M."/>
            <person name="South S.T."/>
            <person name="Li X."/>
            <person name="Liu Y."/>
            <person name="Gould S.J."/>
        </authorList>
    </citation>
    <scope>INTERACTION WITH PEX19</scope>
</reference>
<reference key="8">
    <citation type="journal article" date="2001" name="Mol. Cell. Biol.">
        <title>Human pex19p binds peroxisomal integral membrane proteins at regions distinct from their sorting sequences.</title>
        <authorList>
            <person name="Fransen M."/>
            <person name="Wylin T."/>
            <person name="Brees C."/>
            <person name="Mannaerts G.P."/>
            <person name="Van Veldhoven P.P."/>
        </authorList>
    </citation>
    <scope>INTERACTION WITH PEX19</scope>
    <scope>SUBCELLULAR LOCATION</scope>
</reference>
<reference key="9">
    <citation type="journal article" date="2009" name="Am. J. Med. Genet. A">
        <title>Zellweger syndrome caused by PEX13 deficiency: report of two novel mutations.</title>
        <authorList>
            <person name="Al-Dirbashi O.Y."/>
            <person name="Shaheen R."/>
            <person name="Al-Sayed M."/>
            <person name="Al-Dosari M."/>
            <person name="Makhseed N."/>
            <person name="Abu Safieh L."/>
            <person name="Santa T."/>
            <person name="Meyer B.F."/>
            <person name="Shimozawa N."/>
            <person name="Alkuraya F.S."/>
        </authorList>
    </citation>
    <scope>INVOLVEMENT IN PBD11A</scope>
</reference>
<reference key="10">
    <citation type="journal article" date="2017" name="J. Biol. Chem.">
        <title>The peroxisomal matrix protein translocon is a large cavity-forming protein assembly into which PEX5 protein enters to release its cargo.</title>
        <authorList>
            <person name="Dias A.F."/>
            <person name="Rodrigues T.A."/>
            <person name="Pedrosa A.G."/>
            <person name="Barros-Barbosa A."/>
            <person name="Francisco T."/>
            <person name="Azevedo J.E."/>
        </authorList>
    </citation>
    <scope>FUNCTION</scope>
    <scope>INTERACTION WITH PEX14</scope>
</reference>
<reference key="11">
    <citation type="journal article" date="1999" name="Am. J. Hum. Genet.">
        <title>PEX13 is mutated in complementation group 13 of the peroxisome-biogenesis disorders.</title>
        <authorList>
            <person name="Liu Y."/>
            <person name="Bjoerkman J."/>
            <person name="Urquhart A."/>
            <person name="Wanders R.J.A."/>
            <person name="Crane D.I."/>
            <person name="Gould S.J."/>
        </authorList>
    </citation>
    <scope>VARIANT PBD11B THR-326</scope>
</reference>
<reference key="12">
    <citation type="journal article" date="1999" name="Hum. Mol. Genet.">
        <title>Nonsense and temperature-sensitive mutations in PEX13 are the cause of complementation group H of peroxisome biogenesis disorders.</title>
        <authorList>
            <person name="Shimozawa N."/>
            <person name="Suzuki Y."/>
            <person name="Zhang Z."/>
            <person name="Imamura A."/>
            <person name="Toyama R."/>
            <person name="Mukai S."/>
            <person name="Fujiki Y."/>
            <person name="Tsukamoto T."/>
            <person name="Osumi T."/>
            <person name="Orii T."/>
            <person name="Wanders R.J.A."/>
            <person name="Kondo N."/>
        </authorList>
    </citation>
    <scope>INVOLVEMENT IN PBD11A</scope>
    <scope>VARIANT PBD11B THR-326</scope>
</reference>
<reference key="13">
    <citation type="journal article" date="2006" name="Hum. Mutat.">
        <title>Identification of novel mutations in PEX2, PEX6, PEX10, PEX12, and PEX13 in Zellweger spectrum patients.</title>
        <authorList>
            <person name="Krause C."/>
            <person name="Rosewich H."/>
            <person name="Thanos M."/>
            <person name="Gaertner J."/>
        </authorList>
    </citation>
    <scope>VARIANT PBD11B GLY-313</scope>
</reference>
<accession>Q92968</accession>
<accession>B2RCS1</accession>
<feature type="chain" id="PRO_0000058323" description="Peroxisomal membrane protein PEX13">
    <location>
        <begin position="1"/>
        <end position="403"/>
    </location>
</feature>
<feature type="topological domain" description="Peroxisomal matrix" evidence="1">
    <location>
        <begin position="1"/>
        <end position="134"/>
    </location>
</feature>
<feature type="transmembrane region" description="Helical" evidence="4">
    <location>
        <begin position="135"/>
        <end position="155"/>
    </location>
</feature>
<feature type="topological domain" description="Cytoplasmic" evidence="17">
    <location>
        <begin position="156"/>
        <end position="174"/>
    </location>
</feature>
<feature type="transmembrane region" description="Helical" evidence="4">
    <location>
        <begin position="175"/>
        <end position="192"/>
    </location>
</feature>
<feature type="topological domain" description="Peroxisomal matrix" evidence="17">
    <location>
        <begin position="193"/>
        <end position="233"/>
    </location>
</feature>
<feature type="transmembrane region" description="Helical" evidence="4">
    <location>
        <begin position="234"/>
        <end position="254"/>
    </location>
</feature>
<feature type="topological domain" description="Cytoplasmic" evidence="1">
    <location>
        <begin position="255"/>
        <end position="403"/>
    </location>
</feature>
<feature type="domain" description="SH3" evidence="5">
    <location>
        <begin position="272"/>
        <end position="336"/>
    </location>
</feature>
<feature type="region of interest" description="Disordered" evidence="6">
    <location>
        <begin position="1"/>
        <end position="68"/>
    </location>
</feature>
<feature type="region of interest" description="Targeting to peroxisomes" evidence="10">
    <location>
        <begin position="145"/>
        <end position="233"/>
    </location>
</feature>
<feature type="region of interest" description="Interaction with PEX19" evidence="10">
    <location>
        <begin position="175"/>
        <end position="196"/>
    </location>
</feature>
<feature type="compositionally biased region" description="Pro residues" evidence="6">
    <location>
        <begin position="1"/>
        <end position="11"/>
    </location>
</feature>
<feature type="compositionally biased region" description="Polar residues" evidence="6">
    <location>
        <begin position="59"/>
        <end position="68"/>
    </location>
</feature>
<feature type="modified residue" description="Phosphoserine" evidence="3">
    <location>
        <position position="354"/>
    </location>
</feature>
<feature type="sequence variant" id="VAR_087140" description="In PBD11B; dbSNP:rs61752113." evidence="11">
    <original>W</original>
    <variation>G</variation>
    <location>
        <position position="313"/>
    </location>
</feature>
<feature type="sequence variant" id="VAR_009306" description="In PBD11B; neonatal adrenoleukodystrophy; dbSNP:rs61752115." evidence="7 8">
    <original>I</original>
    <variation>T</variation>
    <location>
        <position position="326"/>
    </location>
</feature>
<feature type="turn" evidence="19">
    <location>
        <begin position="267"/>
        <end position="270"/>
    </location>
</feature>
<feature type="strand" evidence="19">
    <location>
        <begin position="274"/>
        <end position="281"/>
    </location>
</feature>
<feature type="strand" evidence="19">
    <location>
        <begin position="298"/>
        <end position="301"/>
    </location>
</feature>
<feature type="helix" evidence="19">
    <location>
        <begin position="304"/>
        <end position="306"/>
    </location>
</feature>
<feature type="strand" evidence="19">
    <location>
        <begin position="313"/>
        <end position="321"/>
    </location>
</feature>
<feature type="strand" evidence="19">
    <location>
        <begin position="323"/>
        <end position="327"/>
    </location>
</feature>
<feature type="helix" evidence="19">
    <location>
        <begin position="328"/>
        <end position="330"/>
    </location>
</feature>
<feature type="strand" evidence="19">
    <location>
        <begin position="331"/>
        <end position="337"/>
    </location>
</feature>
<feature type="helix" evidence="20">
    <location>
        <begin position="372"/>
        <end position="378"/>
    </location>
</feature>
<comment type="function">
    <text evidence="2 13 14 15">Component of the PEX13-PEX14 docking complex, a translocon channel that specifically mediates the import of peroxisomal cargo proteins bound to PEX5 receptor (PubMed:28765278, PubMed:8858165, PubMed:9653144). The PEX13-PEX14 docking complex forms a large import pore which can be opened to a diameter of about 9 nm (By similarity). Mechanistically, PEX5 receptor along with cargo proteins associates with the PEX14 subunit of the PEX13-PEX14 docking complex in the cytosol, leading to the insertion of the receptor into the organelle membrane with the concomitant translocation of the cargo into the peroxisome matrix (PubMed:28765278, PubMed:8858165, PubMed:9653144). Involved in the import of PTS1- and PTS2-type containing proteins (PubMed:8858165, PubMed:9653144).</text>
</comment>
<comment type="subunit">
    <text evidence="9 10 13">Interacts (via SH3 domain) with PEX14 (via SH3-binding motif); forming the PEX13-PEX14 docking complex (PubMed:28765278). Interacts with PEX19 (PubMed:10704444, PubMed:11390669).</text>
</comment>
<comment type="interaction">
    <interactant intactId="EBI-594849">
        <id>Q92968</id>
    </interactant>
    <interactant intactId="EBI-741885">
        <id>Q96LK0</id>
        <label>CEP19</label>
    </interactant>
    <organismsDiffer>false</organismsDiffer>
    <experiments>3</experiments>
</comment>
<comment type="interaction">
    <interactant intactId="EBI-594849">
        <id>Q92968</id>
    </interactant>
    <interactant intactId="EBI-594747">
        <id>P40855</id>
        <label>PEX19</label>
    </interactant>
    <organismsDiffer>false</organismsDiffer>
    <experiments>12</experiments>
</comment>
<comment type="subcellular location">
    <subcellularLocation>
        <location evidence="10 14">Peroxisome membrane</location>
        <topology evidence="4">Multi-pass membrane protein</topology>
    </subcellularLocation>
</comment>
<comment type="disease" evidence="7 12">
    <disease id="DI-02153">
        <name>Peroxisome biogenesis disorder complementation group 13</name>
        <acronym>PBD-CG13</acronym>
        <description>A peroxisomal disorder arising from a failure of protein import into the peroxisomal membrane or matrix. The peroxisome biogenesis disorders (PBD group) are genetically heterogeneous with at least 14 distinct genetic groups as concluded from complementation studies. Include disorders are: Zellweger syndrome (ZWS), neonatal adrenoleukodystrophy (NALD), infantile Refsum disease (IRD), and classical rhizomelic chondrodysplasia punctata (RCDP). ZWS, NALD and IRD are distinct from RCDP and constitute a clinical continuum of overlapping phenotypes known as the Zellweger spectrum (PBD-ZSS).</description>
        <dbReference type="MIM" id="614883"/>
    </disease>
    <text>The disease is caused by variants affecting the gene represented in this entry.</text>
</comment>
<comment type="disease" evidence="7 12">
    <disease id="DI-03593">
        <name>Peroxisome biogenesis disorder 11A</name>
        <acronym>PBD11A</acronym>
        <description>A fatal peroxisome biogenesis disorder belonging to the Zellweger disease spectrum and clinically characterized by severe neurologic dysfunction with profound psychomotor retardation, severe hypotonia and neonatal seizures, craniofacial abnormalities, liver dysfunction, and biochemically by the absence of peroxisomes. Additional features include cardiovascular and skeletal defects, renal cysts, ocular abnormalities, and hearing impairment. Most severely affected individuals with the classic form of the disease (classic Zellweger syndrome) die within the first year of life.</description>
        <dbReference type="MIM" id="614883"/>
    </disease>
    <text>The disease is caused by variants affecting the gene represented in this entry.</text>
</comment>
<comment type="disease" evidence="7 8 11">
    <disease id="DI-03594">
        <name>Peroxisome biogenesis disorder 11B</name>
        <acronym>PBD11B</acronym>
        <description>A peroxisome biogenesis disorder that includes neonatal adrenoleukodystrophy (NALD) and infantile Refsum disease (IRD), two milder manifestations of the Zellweger disease spectrum. The clinical course of patients with the NALD and IRD presentation is variable and may include developmental delay, hypotonia, liver dysfunction, sensorineural hearing loss, retinal dystrophy and vision impairment. Children with the NALD presentation may reach their teens, while patients with the IRD presentation may reach adulthood. The clinical conditions are often slowly progressive in particular with respect to loss of hearing and vision. The biochemical abnormalities include accumulation of phytanic acid, very long chain fatty acids (VLCFA), di- and trihydroxycholestanoic acid and pipecolic acid.</description>
        <dbReference type="MIM" id="614885"/>
    </disease>
    <text>The disease is caused by variants affecting the gene represented in this entry.</text>
</comment>
<comment type="similarity">
    <text evidence="17">Belongs to the peroxin-13 family.</text>
</comment>
<comment type="caution">
    <text evidence="17">It is uncertain whether Met-1 or Met-40 is the initiator.</text>
</comment>
<dbReference type="EMBL" id="AF048755">
    <property type="protein sequence ID" value="AAC39844.1"/>
    <property type="molecule type" value="mRNA"/>
</dbReference>
<dbReference type="EMBL" id="AB022192">
    <property type="protein sequence ID" value="BAA88907.1"/>
    <property type="molecule type" value="mRNA"/>
</dbReference>
<dbReference type="EMBL" id="AK315244">
    <property type="protein sequence ID" value="BAG37668.1"/>
    <property type="molecule type" value="mRNA"/>
</dbReference>
<dbReference type="EMBL" id="CH471053">
    <property type="protein sequence ID" value="EAX00018.1"/>
    <property type="molecule type" value="Genomic_DNA"/>
</dbReference>
<dbReference type="EMBL" id="BC067090">
    <property type="protein sequence ID" value="AAH67090.1"/>
    <property type="molecule type" value="mRNA"/>
</dbReference>
<dbReference type="EMBL" id="U71374">
    <property type="protein sequence ID" value="AAD05572.1"/>
    <property type="molecule type" value="mRNA"/>
</dbReference>
<dbReference type="CCDS" id="CCDS1866.1"/>
<dbReference type="RefSeq" id="NP_002609.1">
    <property type="nucleotide sequence ID" value="NM_002618.4"/>
</dbReference>
<dbReference type="PDB" id="7Z0I">
    <property type="method" value="X-ray"/>
    <property type="resolution" value="1.80 A"/>
    <property type="chains" value="A=261-346"/>
</dbReference>
<dbReference type="PDB" id="7Z0J">
    <property type="method" value="X-ray"/>
    <property type="resolution" value="2.30 A"/>
    <property type="chains" value="A/B=261-346, A/B=371-383"/>
</dbReference>
<dbReference type="PDB" id="7Z0K">
    <property type="method" value="X-ray"/>
    <property type="resolution" value="2.30 A"/>
    <property type="chains" value="A/B=261-346"/>
</dbReference>
<dbReference type="PDBsum" id="7Z0I"/>
<dbReference type="PDBsum" id="7Z0J"/>
<dbReference type="PDBsum" id="7Z0K"/>
<dbReference type="SMR" id="Q92968"/>
<dbReference type="BioGRID" id="111217">
    <property type="interactions" value="36"/>
</dbReference>
<dbReference type="ComplexPortal" id="CPX-10021">
    <property type="entry name" value="Peroxisomal PEX13-PEX14 docking complex"/>
</dbReference>
<dbReference type="ELM" id="Q92968"/>
<dbReference type="FunCoup" id="Q92968">
    <property type="interactions" value="1085"/>
</dbReference>
<dbReference type="IntAct" id="Q92968">
    <property type="interactions" value="21"/>
</dbReference>
<dbReference type="MINT" id="Q92968"/>
<dbReference type="STRING" id="9606.ENSP00000295030"/>
<dbReference type="TCDB" id="3.A.20.1.1">
    <property type="family name" value="the peroxisomal protein importer (ppi) family"/>
</dbReference>
<dbReference type="iPTMnet" id="Q92968"/>
<dbReference type="PhosphoSitePlus" id="Q92968"/>
<dbReference type="BioMuta" id="PEX13"/>
<dbReference type="DMDM" id="3914319"/>
<dbReference type="jPOST" id="Q92968"/>
<dbReference type="MassIVE" id="Q92968"/>
<dbReference type="PaxDb" id="9606-ENSP00000295030"/>
<dbReference type="PeptideAtlas" id="Q92968"/>
<dbReference type="ProteomicsDB" id="75634"/>
<dbReference type="Pumba" id="Q92968"/>
<dbReference type="Antibodypedia" id="30577">
    <property type="antibodies" value="108 antibodies from 30 providers"/>
</dbReference>
<dbReference type="DNASU" id="5194"/>
<dbReference type="Ensembl" id="ENST00000295030.6">
    <property type="protein sequence ID" value="ENSP00000295030.4"/>
    <property type="gene ID" value="ENSG00000162928.9"/>
</dbReference>
<dbReference type="GeneID" id="5194"/>
<dbReference type="KEGG" id="hsa:5194"/>
<dbReference type="MANE-Select" id="ENST00000295030.6">
    <property type="protein sequence ID" value="ENSP00000295030.4"/>
    <property type="RefSeq nucleotide sequence ID" value="NM_002618.4"/>
    <property type="RefSeq protein sequence ID" value="NP_002609.1"/>
</dbReference>
<dbReference type="UCSC" id="uc002sau.5">
    <property type="organism name" value="human"/>
</dbReference>
<dbReference type="AGR" id="HGNC:8855"/>
<dbReference type="CTD" id="5194"/>
<dbReference type="DisGeNET" id="5194"/>
<dbReference type="GeneCards" id="PEX13"/>
<dbReference type="GeneReviews" id="PEX13"/>
<dbReference type="HGNC" id="HGNC:8855">
    <property type="gene designation" value="PEX13"/>
</dbReference>
<dbReference type="HPA" id="ENSG00000162928">
    <property type="expression patterns" value="Low tissue specificity"/>
</dbReference>
<dbReference type="MalaCards" id="PEX13"/>
<dbReference type="MIM" id="601789">
    <property type="type" value="gene"/>
</dbReference>
<dbReference type="MIM" id="614883">
    <property type="type" value="phenotype"/>
</dbReference>
<dbReference type="MIM" id="614885">
    <property type="type" value="phenotype"/>
</dbReference>
<dbReference type="neXtProt" id="NX_Q92968"/>
<dbReference type="OpenTargets" id="ENSG00000162928"/>
<dbReference type="Orphanet" id="772">
    <property type="disease" value="Infantile Refsum disease"/>
</dbReference>
<dbReference type="Orphanet" id="44">
    <property type="disease" value="Neonatal adrenoleukodystrophy"/>
</dbReference>
<dbReference type="Orphanet" id="912">
    <property type="disease" value="Zellweger syndrome"/>
</dbReference>
<dbReference type="PharmGKB" id="PA33197"/>
<dbReference type="VEuPathDB" id="HostDB:ENSG00000162928"/>
<dbReference type="eggNOG" id="KOG3875">
    <property type="taxonomic scope" value="Eukaryota"/>
</dbReference>
<dbReference type="GeneTree" id="ENSGT00390000016883"/>
<dbReference type="HOGENOM" id="CLU_045457_0_0_1"/>
<dbReference type="InParanoid" id="Q92968"/>
<dbReference type="OMA" id="EGWFPKK"/>
<dbReference type="OrthoDB" id="10037838at2759"/>
<dbReference type="PAN-GO" id="Q92968">
    <property type="GO annotations" value="3 GO annotations based on evolutionary models"/>
</dbReference>
<dbReference type="PhylomeDB" id="Q92968"/>
<dbReference type="TreeFam" id="TF327117"/>
<dbReference type="PathwayCommons" id="Q92968"/>
<dbReference type="Reactome" id="R-HSA-8866654">
    <property type="pathway name" value="E3 ubiquitin ligases ubiquitinate target proteins"/>
</dbReference>
<dbReference type="Reactome" id="R-HSA-9033241">
    <property type="pathway name" value="Peroxisomal protein import"/>
</dbReference>
<dbReference type="Reactome" id="R-HSA-9603798">
    <property type="pathway name" value="Class I peroxisomal membrane protein import"/>
</dbReference>
<dbReference type="SignaLink" id="Q92968"/>
<dbReference type="SIGNOR" id="Q92968"/>
<dbReference type="BioGRID-ORCS" id="5194">
    <property type="hits" value="61 hits in 1166 CRISPR screens"/>
</dbReference>
<dbReference type="ChiTaRS" id="PEX13">
    <property type="organism name" value="human"/>
</dbReference>
<dbReference type="GeneWiki" id="PEX13"/>
<dbReference type="GenomeRNAi" id="5194"/>
<dbReference type="Pharos" id="Q92968">
    <property type="development level" value="Tbio"/>
</dbReference>
<dbReference type="PRO" id="PR:Q92968"/>
<dbReference type="Proteomes" id="UP000005640">
    <property type="component" value="Chromosome 2"/>
</dbReference>
<dbReference type="RNAct" id="Q92968">
    <property type="molecule type" value="protein"/>
</dbReference>
<dbReference type="Bgee" id="ENSG00000162928">
    <property type="expression patterns" value="Expressed in secondary oocyte and 175 other cell types or tissues"/>
</dbReference>
<dbReference type="ExpressionAtlas" id="Q92968">
    <property type="expression patterns" value="baseline and differential"/>
</dbReference>
<dbReference type="GO" id="GO:0005829">
    <property type="term" value="C:cytosol"/>
    <property type="evidence" value="ECO:0000304"/>
    <property type="project" value="Reactome"/>
</dbReference>
<dbReference type="GO" id="GO:0016020">
    <property type="term" value="C:membrane"/>
    <property type="evidence" value="ECO:0007005"/>
    <property type="project" value="UniProtKB"/>
</dbReference>
<dbReference type="GO" id="GO:1990429">
    <property type="term" value="C:peroxisomal importomer complex"/>
    <property type="evidence" value="ECO:0000318"/>
    <property type="project" value="GO_Central"/>
</dbReference>
<dbReference type="GO" id="GO:0005778">
    <property type="term" value="C:peroxisomal membrane"/>
    <property type="evidence" value="ECO:0000314"/>
    <property type="project" value="UniProtKB"/>
</dbReference>
<dbReference type="GO" id="GO:0005777">
    <property type="term" value="C:peroxisome"/>
    <property type="evidence" value="ECO:0000314"/>
    <property type="project" value="UniProtKB"/>
</dbReference>
<dbReference type="GO" id="GO:0008320">
    <property type="term" value="F:protein transmembrane transporter activity"/>
    <property type="evidence" value="ECO:0000314"/>
    <property type="project" value="UniProtKB"/>
</dbReference>
<dbReference type="GO" id="GO:0034614">
    <property type="term" value="P:cellular response to reactive oxygen species"/>
    <property type="evidence" value="ECO:0000314"/>
    <property type="project" value="UniProt"/>
</dbReference>
<dbReference type="GO" id="GO:0021795">
    <property type="term" value="P:cerebral cortex cell migration"/>
    <property type="evidence" value="ECO:0000250"/>
    <property type="project" value="UniProtKB"/>
</dbReference>
<dbReference type="GO" id="GO:0001561">
    <property type="term" value="P:fatty acid alpha-oxidation"/>
    <property type="evidence" value="ECO:0000250"/>
    <property type="project" value="UniProtKB"/>
</dbReference>
<dbReference type="GO" id="GO:0007626">
    <property type="term" value="P:locomotory behavior"/>
    <property type="evidence" value="ECO:0000250"/>
    <property type="project" value="UniProtKB"/>
</dbReference>
<dbReference type="GO" id="GO:0060152">
    <property type="term" value="P:microtubule-based peroxisome localization"/>
    <property type="evidence" value="ECO:0000250"/>
    <property type="project" value="UniProtKB"/>
</dbReference>
<dbReference type="GO" id="GO:0001764">
    <property type="term" value="P:neuron migration"/>
    <property type="evidence" value="ECO:0000250"/>
    <property type="project" value="UniProtKB"/>
</dbReference>
<dbReference type="GO" id="GO:0016560">
    <property type="term" value="P:protein import into peroxisome matrix, docking"/>
    <property type="evidence" value="ECO:0000314"/>
    <property type="project" value="UniProtKB"/>
</dbReference>
<dbReference type="GO" id="GO:0016561">
    <property type="term" value="P:protein import into peroxisome matrix, translocation"/>
    <property type="evidence" value="ECO:0000314"/>
    <property type="project" value="UniProt"/>
</dbReference>
<dbReference type="GO" id="GO:0001967">
    <property type="term" value="P:suckling behavior"/>
    <property type="evidence" value="ECO:0000250"/>
    <property type="project" value="UniProtKB"/>
</dbReference>
<dbReference type="CDD" id="cd11864">
    <property type="entry name" value="SH3_PEX13_eumet"/>
    <property type="match status" value="1"/>
</dbReference>
<dbReference type="FunFam" id="2.30.30.40:FF:000109">
    <property type="entry name" value="Peroxisomal biogenesis factor 13"/>
    <property type="match status" value="1"/>
</dbReference>
<dbReference type="Gene3D" id="2.30.30.40">
    <property type="entry name" value="SH3 Domains"/>
    <property type="match status" value="1"/>
</dbReference>
<dbReference type="InterPro" id="IPR007223">
    <property type="entry name" value="Peroxin-13_N"/>
</dbReference>
<dbReference type="InterPro" id="IPR035463">
    <property type="entry name" value="Pex13"/>
</dbReference>
<dbReference type="InterPro" id="IPR036028">
    <property type="entry name" value="SH3-like_dom_sf"/>
</dbReference>
<dbReference type="InterPro" id="IPR001452">
    <property type="entry name" value="SH3_domain"/>
</dbReference>
<dbReference type="PANTHER" id="PTHR19332">
    <property type="entry name" value="PEROXISOMAL MEMBRANE PROTEIN PEX13"/>
    <property type="match status" value="1"/>
</dbReference>
<dbReference type="PANTHER" id="PTHR19332:SF1">
    <property type="entry name" value="PEROXISOMAL MEMBRANE PROTEIN PEX13"/>
    <property type="match status" value="1"/>
</dbReference>
<dbReference type="Pfam" id="PF04088">
    <property type="entry name" value="Peroxin-13_N"/>
    <property type="match status" value="1"/>
</dbReference>
<dbReference type="Pfam" id="PF14604">
    <property type="entry name" value="SH3_9"/>
    <property type="match status" value="1"/>
</dbReference>
<dbReference type="PRINTS" id="PR00452">
    <property type="entry name" value="SH3DOMAIN"/>
</dbReference>
<dbReference type="SMART" id="SM00326">
    <property type="entry name" value="SH3"/>
    <property type="match status" value="1"/>
</dbReference>
<dbReference type="SUPFAM" id="SSF50044">
    <property type="entry name" value="SH3-domain"/>
    <property type="match status" value="1"/>
</dbReference>
<dbReference type="PROSITE" id="PS50002">
    <property type="entry name" value="SH3"/>
    <property type="match status" value="1"/>
</dbReference>
<sequence>MASQPPPPPKPWETRRIPGAGPGPGPGPTFQSADLGPTLMTRPGQPALTRVPPPILPRPSQQTGSSSVNTFRPAYSSFSSGYGAYGNSFYGGYSPYSYGYNGLGYNRLRVDDLPPSRFVQQAEESSRGAFQSIESIVHAFASVSMMMDATFSAVYNSFRAVLDVANHFSRLKIHFTKVFSAFALVRTIRYLYRRLQRMLGLRRGSENEDLWAESEGTVACLGAEDRAATSAKSWPIFLFFAVILGGPYLIWKLLSTHSDEVTDSINWASGEDDHVVARAEYDFAAVSEEEISFRAGDMLNLALKEQQPKVRGWLLASLDGQTTGLIPANYVKILGKRKGRKTVESSKVSKQQQSFTNPTLTKGATVADSLDEQEAAFESVFVETNKVPVAPDSIGKDGEKQDL</sequence>
<organism>
    <name type="scientific">Homo sapiens</name>
    <name type="common">Human</name>
    <dbReference type="NCBI Taxonomy" id="9606"/>
    <lineage>
        <taxon>Eukaryota</taxon>
        <taxon>Metazoa</taxon>
        <taxon>Chordata</taxon>
        <taxon>Craniata</taxon>
        <taxon>Vertebrata</taxon>
        <taxon>Euteleostomi</taxon>
        <taxon>Mammalia</taxon>
        <taxon>Eutheria</taxon>
        <taxon>Euarchontoglires</taxon>
        <taxon>Primates</taxon>
        <taxon>Haplorrhini</taxon>
        <taxon>Catarrhini</taxon>
        <taxon>Hominidae</taxon>
        <taxon>Homo</taxon>
    </lineage>
</organism>
<name>PEX13_HUMAN</name>
<evidence type="ECO:0000250" key="1">
    <source>
        <dbReference type="UniProtKB" id="D4A2Y9"/>
    </source>
</evidence>
<evidence type="ECO:0000250" key="2">
    <source>
        <dbReference type="UniProtKB" id="P80667"/>
    </source>
</evidence>
<evidence type="ECO:0000250" key="3">
    <source>
        <dbReference type="UniProtKB" id="Q9D0K1"/>
    </source>
</evidence>
<evidence type="ECO:0000255" key="4"/>
<evidence type="ECO:0000255" key="5">
    <source>
        <dbReference type="PROSITE-ProRule" id="PRU00192"/>
    </source>
</evidence>
<evidence type="ECO:0000256" key="6">
    <source>
        <dbReference type="SAM" id="MobiDB-lite"/>
    </source>
</evidence>
<evidence type="ECO:0000269" key="7">
    <source>
    </source>
</evidence>
<evidence type="ECO:0000269" key="8">
    <source>
    </source>
</evidence>
<evidence type="ECO:0000269" key="9">
    <source>
    </source>
</evidence>
<evidence type="ECO:0000269" key="10">
    <source>
    </source>
</evidence>
<evidence type="ECO:0000269" key="11">
    <source>
    </source>
</evidence>
<evidence type="ECO:0000269" key="12">
    <source>
    </source>
</evidence>
<evidence type="ECO:0000269" key="13">
    <source>
    </source>
</evidence>
<evidence type="ECO:0000269" key="14">
    <source>
    </source>
</evidence>
<evidence type="ECO:0000269" key="15">
    <source>
    </source>
</evidence>
<evidence type="ECO:0000303" key="16">
    <source>
    </source>
</evidence>
<evidence type="ECO:0000305" key="17"/>
<evidence type="ECO:0000312" key="18">
    <source>
        <dbReference type="HGNC" id="HGNC:8855"/>
    </source>
</evidence>
<evidence type="ECO:0007829" key="19">
    <source>
        <dbReference type="PDB" id="7Z0I"/>
    </source>
</evidence>
<evidence type="ECO:0007829" key="20">
    <source>
        <dbReference type="PDB" id="7Z0J"/>
    </source>
</evidence>
<gene>
    <name evidence="16 18" type="primary">PEX13</name>
</gene>
<proteinExistence type="evidence at protein level"/>
<protein>
    <recommendedName>
        <fullName evidence="17">Peroxisomal membrane protein PEX13</fullName>
    </recommendedName>
    <alternativeName>
        <fullName evidence="17">Peroxin-13</fullName>
    </alternativeName>
</protein>